<name>TRPB_ENT38</name>
<sequence length="397" mass="42962">MTTLLNPYFGEFGGMYVPQILMPALRQLEEAFVSAQKDPAFQAEFTDLLKNYAGRPTALTKCRNLTEGTKTTLYLKREDLLHGGAHKTNQVLGQALLAKRMGKTEIIAETGAGQHGVASALACALLGLKCRIYMGAKDIERQSPNVFRMRLMGADVIPVHSGSATLKDACNEALRDWSGSYDTAHYMLGTAAGPHPFPTIVREFQRMIGEETKAQILEKEGRLPDAVIACVGGGSNAIGMFADFIDDTSVGLIGVEPAGHGIESGEHGAPLKHGRVGIYFGMKSPMMQTDEGQIEESYSISAGLDFPSVGPQHAHLNSIGRAEYVSITDDEALEAFKTLCRNEGIIPALESSHALAYALKMIKEDPEKEQLLVVNLSGRGDKDIFTVHDILKARGEI</sequence>
<evidence type="ECO:0000255" key="1">
    <source>
        <dbReference type="HAMAP-Rule" id="MF_00133"/>
    </source>
</evidence>
<comment type="function">
    <text evidence="1">The beta subunit is responsible for the synthesis of L-tryptophan from indole and L-serine.</text>
</comment>
<comment type="catalytic activity">
    <reaction evidence="1">
        <text>(1S,2R)-1-C-(indol-3-yl)glycerol 3-phosphate + L-serine = D-glyceraldehyde 3-phosphate + L-tryptophan + H2O</text>
        <dbReference type="Rhea" id="RHEA:10532"/>
        <dbReference type="ChEBI" id="CHEBI:15377"/>
        <dbReference type="ChEBI" id="CHEBI:33384"/>
        <dbReference type="ChEBI" id="CHEBI:57912"/>
        <dbReference type="ChEBI" id="CHEBI:58866"/>
        <dbReference type="ChEBI" id="CHEBI:59776"/>
        <dbReference type="EC" id="4.2.1.20"/>
    </reaction>
</comment>
<comment type="cofactor">
    <cofactor evidence="1">
        <name>pyridoxal 5'-phosphate</name>
        <dbReference type="ChEBI" id="CHEBI:597326"/>
    </cofactor>
</comment>
<comment type="pathway">
    <text evidence="1">Amino-acid biosynthesis; L-tryptophan biosynthesis; L-tryptophan from chorismate: step 5/5.</text>
</comment>
<comment type="subunit">
    <text evidence="1">Tetramer of two alpha and two beta chains.</text>
</comment>
<comment type="similarity">
    <text evidence="1">Belongs to the TrpB family.</text>
</comment>
<proteinExistence type="inferred from homology"/>
<gene>
    <name evidence="1" type="primary">trpB</name>
    <name type="ordered locus">Ent638_2207</name>
</gene>
<reference key="1">
    <citation type="journal article" date="2010" name="PLoS Genet.">
        <title>Genome sequence of the plant growth promoting endophytic bacterium Enterobacter sp. 638.</title>
        <authorList>
            <person name="Taghavi S."/>
            <person name="van der Lelie D."/>
            <person name="Hoffman A."/>
            <person name="Zhang Y.B."/>
            <person name="Walla M.D."/>
            <person name="Vangronsveld J."/>
            <person name="Newman L."/>
            <person name="Monchy S."/>
        </authorList>
    </citation>
    <scope>NUCLEOTIDE SEQUENCE [LARGE SCALE GENOMIC DNA]</scope>
    <source>
        <strain>638</strain>
    </source>
</reference>
<dbReference type="EC" id="4.2.1.20" evidence="1"/>
<dbReference type="EMBL" id="CP000653">
    <property type="protein sequence ID" value="ABP60882.1"/>
    <property type="molecule type" value="Genomic_DNA"/>
</dbReference>
<dbReference type="RefSeq" id="WP_012017597.1">
    <property type="nucleotide sequence ID" value="NC_009436.1"/>
</dbReference>
<dbReference type="SMR" id="A4WB02"/>
<dbReference type="STRING" id="399742.Ent638_2207"/>
<dbReference type="KEGG" id="ent:Ent638_2207"/>
<dbReference type="eggNOG" id="COG0133">
    <property type="taxonomic scope" value="Bacteria"/>
</dbReference>
<dbReference type="HOGENOM" id="CLU_016734_3_1_6"/>
<dbReference type="OrthoDB" id="9766131at2"/>
<dbReference type="UniPathway" id="UPA00035">
    <property type="reaction ID" value="UER00044"/>
</dbReference>
<dbReference type="Proteomes" id="UP000000230">
    <property type="component" value="Chromosome"/>
</dbReference>
<dbReference type="GO" id="GO:0005737">
    <property type="term" value="C:cytoplasm"/>
    <property type="evidence" value="ECO:0007669"/>
    <property type="project" value="TreeGrafter"/>
</dbReference>
<dbReference type="GO" id="GO:0004834">
    <property type="term" value="F:tryptophan synthase activity"/>
    <property type="evidence" value="ECO:0007669"/>
    <property type="project" value="UniProtKB-UniRule"/>
</dbReference>
<dbReference type="CDD" id="cd06446">
    <property type="entry name" value="Trp-synth_B"/>
    <property type="match status" value="1"/>
</dbReference>
<dbReference type="FunFam" id="3.40.50.1100:FF:000001">
    <property type="entry name" value="Tryptophan synthase beta chain"/>
    <property type="match status" value="1"/>
</dbReference>
<dbReference type="FunFam" id="3.40.50.1100:FF:000004">
    <property type="entry name" value="Tryptophan synthase beta chain"/>
    <property type="match status" value="1"/>
</dbReference>
<dbReference type="Gene3D" id="3.40.50.1100">
    <property type="match status" value="2"/>
</dbReference>
<dbReference type="HAMAP" id="MF_00133">
    <property type="entry name" value="Trp_synth_beta"/>
    <property type="match status" value="1"/>
</dbReference>
<dbReference type="InterPro" id="IPR006653">
    <property type="entry name" value="Trp_synth_b_CS"/>
</dbReference>
<dbReference type="InterPro" id="IPR006654">
    <property type="entry name" value="Trp_synth_beta"/>
</dbReference>
<dbReference type="InterPro" id="IPR023026">
    <property type="entry name" value="Trp_synth_beta/beta-like"/>
</dbReference>
<dbReference type="InterPro" id="IPR001926">
    <property type="entry name" value="TrpB-like_PALP"/>
</dbReference>
<dbReference type="InterPro" id="IPR036052">
    <property type="entry name" value="TrpB-like_PALP_sf"/>
</dbReference>
<dbReference type="NCBIfam" id="TIGR00263">
    <property type="entry name" value="trpB"/>
    <property type="match status" value="1"/>
</dbReference>
<dbReference type="PANTHER" id="PTHR48077:SF3">
    <property type="entry name" value="TRYPTOPHAN SYNTHASE"/>
    <property type="match status" value="1"/>
</dbReference>
<dbReference type="PANTHER" id="PTHR48077">
    <property type="entry name" value="TRYPTOPHAN SYNTHASE-RELATED"/>
    <property type="match status" value="1"/>
</dbReference>
<dbReference type="Pfam" id="PF00291">
    <property type="entry name" value="PALP"/>
    <property type="match status" value="1"/>
</dbReference>
<dbReference type="PIRSF" id="PIRSF001413">
    <property type="entry name" value="Trp_syn_beta"/>
    <property type="match status" value="1"/>
</dbReference>
<dbReference type="SUPFAM" id="SSF53686">
    <property type="entry name" value="Tryptophan synthase beta subunit-like PLP-dependent enzymes"/>
    <property type="match status" value="1"/>
</dbReference>
<dbReference type="PROSITE" id="PS00168">
    <property type="entry name" value="TRP_SYNTHASE_BETA"/>
    <property type="match status" value="1"/>
</dbReference>
<protein>
    <recommendedName>
        <fullName evidence="1">Tryptophan synthase beta chain</fullName>
        <ecNumber evidence="1">4.2.1.20</ecNumber>
    </recommendedName>
</protein>
<feature type="chain" id="PRO_1000057862" description="Tryptophan synthase beta chain">
    <location>
        <begin position="1"/>
        <end position="397"/>
    </location>
</feature>
<feature type="modified residue" description="N6-(pyridoxal phosphate)lysine" evidence="1">
    <location>
        <position position="87"/>
    </location>
</feature>
<keyword id="KW-0028">Amino-acid biosynthesis</keyword>
<keyword id="KW-0057">Aromatic amino acid biosynthesis</keyword>
<keyword id="KW-0456">Lyase</keyword>
<keyword id="KW-0663">Pyridoxal phosphate</keyword>
<keyword id="KW-0822">Tryptophan biosynthesis</keyword>
<organism>
    <name type="scientific">Enterobacter sp. (strain 638)</name>
    <dbReference type="NCBI Taxonomy" id="399742"/>
    <lineage>
        <taxon>Bacteria</taxon>
        <taxon>Pseudomonadati</taxon>
        <taxon>Pseudomonadota</taxon>
        <taxon>Gammaproteobacteria</taxon>
        <taxon>Enterobacterales</taxon>
        <taxon>Enterobacteriaceae</taxon>
        <taxon>Enterobacter</taxon>
    </lineage>
</organism>
<accession>A4WB02</accession>